<evidence type="ECO:0000255" key="1">
    <source>
        <dbReference type="HAMAP-Rule" id="MF_00227"/>
    </source>
</evidence>
<keyword id="KW-0255">Endonuclease</keyword>
<keyword id="KW-0378">Hydrolase</keyword>
<keyword id="KW-0540">Nuclease</keyword>
<keyword id="KW-0694">RNA-binding</keyword>
<keyword id="KW-0819">tRNA processing</keyword>
<name>RNPA_SALEP</name>
<comment type="function">
    <text evidence="1">RNaseP catalyzes the removal of the 5'-leader sequence from pre-tRNA to produce the mature 5'-terminus. It can also cleave other RNA substrates such as 4.5S RNA. The protein component plays an auxiliary but essential role in vivo by binding to the 5'-leader sequence and broadening the substrate specificity of the ribozyme.</text>
</comment>
<comment type="catalytic activity">
    <reaction evidence="1">
        <text>Endonucleolytic cleavage of RNA, removing 5'-extranucleotides from tRNA precursor.</text>
        <dbReference type="EC" id="3.1.26.5"/>
    </reaction>
</comment>
<comment type="subunit">
    <text evidence="1">Consists of a catalytic RNA component (M1 or rnpB) and a protein subunit.</text>
</comment>
<comment type="similarity">
    <text evidence="1">Belongs to the RnpA family.</text>
</comment>
<sequence>MVKLAFPRELRLLTPAHFTFVFQQPQRAGTPQITILGRLNSLGHPRIGLTVAKKNVRRAHERNRIKRLTRESFRLRQHELPAMDFVVVAKKGVADLDNRALSEALEKLWRRHCRLARGS</sequence>
<reference key="1">
    <citation type="journal article" date="2008" name="Genome Res.">
        <title>Comparative genome analysis of Salmonella enteritidis PT4 and Salmonella gallinarum 287/91 provides insights into evolutionary and host adaptation pathways.</title>
        <authorList>
            <person name="Thomson N.R."/>
            <person name="Clayton D.J."/>
            <person name="Windhorst D."/>
            <person name="Vernikos G."/>
            <person name="Davidson S."/>
            <person name="Churcher C."/>
            <person name="Quail M.A."/>
            <person name="Stevens M."/>
            <person name="Jones M.A."/>
            <person name="Watson M."/>
            <person name="Barron A."/>
            <person name="Layton A."/>
            <person name="Pickard D."/>
            <person name="Kingsley R.A."/>
            <person name="Bignell A."/>
            <person name="Clark L."/>
            <person name="Harris B."/>
            <person name="Ormond D."/>
            <person name="Abdellah Z."/>
            <person name="Brooks K."/>
            <person name="Cherevach I."/>
            <person name="Chillingworth T."/>
            <person name="Woodward J."/>
            <person name="Norberczak H."/>
            <person name="Lord A."/>
            <person name="Arrowsmith C."/>
            <person name="Jagels K."/>
            <person name="Moule S."/>
            <person name="Mungall K."/>
            <person name="Saunders M."/>
            <person name="Whitehead S."/>
            <person name="Chabalgoity J.A."/>
            <person name="Maskell D."/>
            <person name="Humphreys T."/>
            <person name="Roberts M."/>
            <person name="Barrow P.A."/>
            <person name="Dougan G."/>
            <person name="Parkhill J."/>
        </authorList>
    </citation>
    <scope>NUCLEOTIDE SEQUENCE [LARGE SCALE GENOMIC DNA]</scope>
    <source>
        <strain>P125109</strain>
    </source>
</reference>
<dbReference type="EC" id="3.1.26.5" evidence="1"/>
<dbReference type="EMBL" id="AM933172">
    <property type="protein sequence ID" value="CAR35233.1"/>
    <property type="molecule type" value="Genomic_DNA"/>
</dbReference>
<dbReference type="RefSeq" id="WP_000239725.1">
    <property type="nucleotide sequence ID" value="NC_011294.1"/>
</dbReference>
<dbReference type="SMR" id="B5QUQ2"/>
<dbReference type="GeneID" id="93035306"/>
<dbReference type="KEGG" id="set:SEN3657"/>
<dbReference type="HOGENOM" id="CLU_117179_11_0_6"/>
<dbReference type="Proteomes" id="UP000000613">
    <property type="component" value="Chromosome"/>
</dbReference>
<dbReference type="GO" id="GO:0030677">
    <property type="term" value="C:ribonuclease P complex"/>
    <property type="evidence" value="ECO:0007669"/>
    <property type="project" value="TreeGrafter"/>
</dbReference>
<dbReference type="GO" id="GO:0042781">
    <property type="term" value="F:3'-tRNA processing endoribonuclease activity"/>
    <property type="evidence" value="ECO:0007669"/>
    <property type="project" value="TreeGrafter"/>
</dbReference>
<dbReference type="GO" id="GO:0004526">
    <property type="term" value="F:ribonuclease P activity"/>
    <property type="evidence" value="ECO:0007669"/>
    <property type="project" value="UniProtKB-UniRule"/>
</dbReference>
<dbReference type="GO" id="GO:0000049">
    <property type="term" value="F:tRNA binding"/>
    <property type="evidence" value="ECO:0007669"/>
    <property type="project" value="UniProtKB-UniRule"/>
</dbReference>
<dbReference type="GO" id="GO:0001682">
    <property type="term" value="P:tRNA 5'-leader removal"/>
    <property type="evidence" value="ECO:0007669"/>
    <property type="project" value="UniProtKB-UniRule"/>
</dbReference>
<dbReference type="FunFam" id="3.30.230.10:FF:000016">
    <property type="entry name" value="Ribonuclease P protein component"/>
    <property type="match status" value="1"/>
</dbReference>
<dbReference type="Gene3D" id="3.30.230.10">
    <property type="match status" value="1"/>
</dbReference>
<dbReference type="HAMAP" id="MF_00227">
    <property type="entry name" value="RNase_P"/>
    <property type="match status" value="1"/>
</dbReference>
<dbReference type="InterPro" id="IPR020568">
    <property type="entry name" value="Ribosomal_Su5_D2-typ_SF"/>
</dbReference>
<dbReference type="InterPro" id="IPR014721">
    <property type="entry name" value="Ribsml_uS5_D2-typ_fold_subgr"/>
</dbReference>
<dbReference type="InterPro" id="IPR000100">
    <property type="entry name" value="RNase_P"/>
</dbReference>
<dbReference type="InterPro" id="IPR020539">
    <property type="entry name" value="RNase_P_CS"/>
</dbReference>
<dbReference type="NCBIfam" id="TIGR00188">
    <property type="entry name" value="rnpA"/>
    <property type="match status" value="1"/>
</dbReference>
<dbReference type="PANTHER" id="PTHR33992">
    <property type="entry name" value="RIBONUCLEASE P PROTEIN COMPONENT"/>
    <property type="match status" value="1"/>
</dbReference>
<dbReference type="PANTHER" id="PTHR33992:SF1">
    <property type="entry name" value="RIBONUCLEASE P PROTEIN COMPONENT"/>
    <property type="match status" value="1"/>
</dbReference>
<dbReference type="Pfam" id="PF00825">
    <property type="entry name" value="Ribonuclease_P"/>
    <property type="match status" value="1"/>
</dbReference>
<dbReference type="SUPFAM" id="SSF54211">
    <property type="entry name" value="Ribosomal protein S5 domain 2-like"/>
    <property type="match status" value="1"/>
</dbReference>
<dbReference type="PROSITE" id="PS00648">
    <property type="entry name" value="RIBONUCLEASE_P"/>
    <property type="match status" value="1"/>
</dbReference>
<proteinExistence type="inferred from homology"/>
<accession>B5QUQ2</accession>
<gene>
    <name evidence="1" type="primary">rnpA</name>
    <name type="ordered locus">SEN3657</name>
</gene>
<feature type="chain" id="PRO_1000100387" description="Ribonuclease P protein component">
    <location>
        <begin position="1"/>
        <end position="119"/>
    </location>
</feature>
<organism>
    <name type="scientific">Salmonella enteritidis PT4 (strain P125109)</name>
    <dbReference type="NCBI Taxonomy" id="550537"/>
    <lineage>
        <taxon>Bacteria</taxon>
        <taxon>Pseudomonadati</taxon>
        <taxon>Pseudomonadota</taxon>
        <taxon>Gammaproteobacteria</taxon>
        <taxon>Enterobacterales</taxon>
        <taxon>Enterobacteriaceae</taxon>
        <taxon>Salmonella</taxon>
    </lineage>
</organism>
<protein>
    <recommendedName>
        <fullName evidence="1">Ribonuclease P protein component</fullName>
        <shortName evidence="1">RNase P protein</shortName>
        <shortName evidence="1">RNaseP protein</shortName>
        <ecNumber evidence="1">3.1.26.5</ecNumber>
    </recommendedName>
    <alternativeName>
        <fullName evidence="1">Protein C5</fullName>
    </alternativeName>
</protein>